<dbReference type="EC" id="1.2.1.12"/>
<dbReference type="EMBL" id="X52871">
    <property type="protein sequence ID" value="CAA37051.1"/>
    <property type="molecule type" value="Genomic_DNA"/>
</dbReference>
<dbReference type="EMBL" id="CR382126">
    <property type="protein sequence ID" value="CAG98730.1"/>
    <property type="molecule type" value="Genomic_DNA"/>
</dbReference>
<dbReference type="PIR" id="S12721">
    <property type="entry name" value="DEVKGL"/>
</dbReference>
<dbReference type="RefSeq" id="XP_456022.1">
    <property type="nucleotide sequence ID" value="XM_456022.1"/>
</dbReference>
<dbReference type="PDB" id="2I5P">
    <property type="method" value="X-ray"/>
    <property type="resolution" value="2.30 A"/>
    <property type="chains" value="O=5-329"/>
</dbReference>
<dbReference type="PDBsum" id="2I5P"/>
<dbReference type="SMR" id="P17819"/>
<dbReference type="STRING" id="284590.P17819"/>
<dbReference type="PaxDb" id="284590-P17819"/>
<dbReference type="KEGG" id="kla:KLLA0_F20988g"/>
<dbReference type="eggNOG" id="KOG0657">
    <property type="taxonomic scope" value="Eukaryota"/>
</dbReference>
<dbReference type="HOGENOM" id="CLU_030140_0_3_1"/>
<dbReference type="InParanoid" id="P17819"/>
<dbReference type="OMA" id="FMAHMAC"/>
<dbReference type="UniPathway" id="UPA00109">
    <property type="reaction ID" value="UER00184"/>
</dbReference>
<dbReference type="Proteomes" id="UP000000598">
    <property type="component" value="Chromosome F"/>
</dbReference>
<dbReference type="GO" id="GO:0005829">
    <property type="term" value="C:cytosol"/>
    <property type="evidence" value="ECO:0007669"/>
    <property type="project" value="TreeGrafter"/>
</dbReference>
<dbReference type="GO" id="GO:0030312">
    <property type="term" value="C:external encapsulating structure"/>
    <property type="evidence" value="ECO:0007669"/>
    <property type="project" value="UniProtKB-ARBA"/>
</dbReference>
<dbReference type="GO" id="GO:0004365">
    <property type="term" value="F:glyceraldehyde-3-phosphate dehydrogenase (NAD+) (phosphorylating) activity"/>
    <property type="evidence" value="ECO:0007669"/>
    <property type="project" value="UniProtKB-EC"/>
</dbReference>
<dbReference type="GO" id="GO:0051287">
    <property type="term" value="F:NAD binding"/>
    <property type="evidence" value="ECO:0007669"/>
    <property type="project" value="InterPro"/>
</dbReference>
<dbReference type="GO" id="GO:0050661">
    <property type="term" value="F:NADP binding"/>
    <property type="evidence" value="ECO:0007669"/>
    <property type="project" value="InterPro"/>
</dbReference>
<dbReference type="GO" id="GO:0006006">
    <property type="term" value="P:glucose metabolic process"/>
    <property type="evidence" value="ECO:0007669"/>
    <property type="project" value="InterPro"/>
</dbReference>
<dbReference type="GO" id="GO:0006096">
    <property type="term" value="P:glycolytic process"/>
    <property type="evidence" value="ECO:0007669"/>
    <property type="project" value="UniProtKB-UniPathway"/>
</dbReference>
<dbReference type="CDD" id="cd18126">
    <property type="entry name" value="GAPDH_I_C"/>
    <property type="match status" value="1"/>
</dbReference>
<dbReference type="CDD" id="cd05214">
    <property type="entry name" value="GAPDH_I_N"/>
    <property type="match status" value="1"/>
</dbReference>
<dbReference type="FunFam" id="3.30.360.10:FF:000001">
    <property type="entry name" value="Glyceraldehyde-3-phosphate dehydrogenase"/>
    <property type="match status" value="1"/>
</dbReference>
<dbReference type="FunFam" id="3.40.50.720:FF:000020">
    <property type="entry name" value="Glyceraldehyde-3-phosphate dehydrogenase"/>
    <property type="match status" value="1"/>
</dbReference>
<dbReference type="Gene3D" id="3.30.360.10">
    <property type="entry name" value="Dihydrodipicolinate Reductase, domain 2"/>
    <property type="match status" value="1"/>
</dbReference>
<dbReference type="Gene3D" id="3.40.50.720">
    <property type="entry name" value="NAD(P)-binding Rossmann-like Domain"/>
    <property type="match status" value="1"/>
</dbReference>
<dbReference type="InterPro" id="IPR020831">
    <property type="entry name" value="GlycerAld/Erythrose_P_DH"/>
</dbReference>
<dbReference type="InterPro" id="IPR020830">
    <property type="entry name" value="GlycerAld_3-P_DH_AS"/>
</dbReference>
<dbReference type="InterPro" id="IPR020829">
    <property type="entry name" value="GlycerAld_3-P_DH_cat"/>
</dbReference>
<dbReference type="InterPro" id="IPR020828">
    <property type="entry name" value="GlycerAld_3-P_DH_NAD(P)-bd"/>
</dbReference>
<dbReference type="InterPro" id="IPR006424">
    <property type="entry name" value="Glyceraldehyde-3-P_DH_1"/>
</dbReference>
<dbReference type="InterPro" id="IPR036291">
    <property type="entry name" value="NAD(P)-bd_dom_sf"/>
</dbReference>
<dbReference type="NCBIfam" id="TIGR01534">
    <property type="entry name" value="GAPDH-I"/>
    <property type="match status" value="1"/>
</dbReference>
<dbReference type="PANTHER" id="PTHR10836">
    <property type="entry name" value="GLYCERALDEHYDE 3-PHOSPHATE DEHYDROGENASE"/>
    <property type="match status" value="1"/>
</dbReference>
<dbReference type="PANTHER" id="PTHR10836:SF76">
    <property type="entry name" value="GLYCERALDEHYDE-3-PHOSPHATE DEHYDROGENASE-RELATED"/>
    <property type="match status" value="1"/>
</dbReference>
<dbReference type="Pfam" id="PF02800">
    <property type="entry name" value="Gp_dh_C"/>
    <property type="match status" value="1"/>
</dbReference>
<dbReference type="Pfam" id="PF00044">
    <property type="entry name" value="Gp_dh_N"/>
    <property type="match status" value="1"/>
</dbReference>
<dbReference type="PIRSF" id="PIRSF000149">
    <property type="entry name" value="GAP_DH"/>
    <property type="match status" value="1"/>
</dbReference>
<dbReference type="PRINTS" id="PR00078">
    <property type="entry name" value="G3PDHDRGNASE"/>
</dbReference>
<dbReference type="SMART" id="SM00846">
    <property type="entry name" value="Gp_dh_N"/>
    <property type="match status" value="1"/>
</dbReference>
<dbReference type="SUPFAM" id="SSF55347">
    <property type="entry name" value="Glyceraldehyde-3-phosphate dehydrogenase-like, C-terminal domain"/>
    <property type="match status" value="1"/>
</dbReference>
<dbReference type="SUPFAM" id="SSF51735">
    <property type="entry name" value="NAD(P)-binding Rossmann-fold domains"/>
    <property type="match status" value="1"/>
</dbReference>
<dbReference type="PROSITE" id="PS00071">
    <property type="entry name" value="GAPDH"/>
    <property type="match status" value="1"/>
</dbReference>
<protein>
    <recommendedName>
        <fullName>Glyceraldehyde-3-phosphate dehydrogenase 1</fullName>
        <shortName>GAPDH 1</shortName>
        <ecNumber>1.2.1.12</ecNumber>
    </recommendedName>
</protein>
<evidence type="ECO:0000250" key="1"/>
<evidence type="ECO:0000255" key="2">
    <source>
        <dbReference type="PROSITE-ProRule" id="PRU10009"/>
    </source>
</evidence>
<evidence type="ECO:0000305" key="3"/>
<organism>
    <name type="scientific">Kluyveromyces lactis (strain ATCC 8585 / CBS 2359 / DSM 70799 / NBRC 1267 / NRRL Y-1140 / WM37)</name>
    <name type="common">Yeast</name>
    <name type="synonym">Candida sphaerica</name>
    <dbReference type="NCBI Taxonomy" id="284590"/>
    <lineage>
        <taxon>Eukaryota</taxon>
        <taxon>Fungi</taxon>
        <taxon>Dikarya</taxon>
        <taxon>Ascomycota</taxon>
        <taxon>Saccharomycotina</taxon>
        <taxon>Saccharomycetes</taxon>
        <taxon>Saccharomycetales</taxon>
        <taxon>Saccharomycetaceae</taxon>
        <taxon>Kluyveromyces</taxon>
    </lineage>
</organism>
<feature type="chain" id="PRO_0000145556" description="Glyceraldehyde-3-phosphate dehydrogenase 1">
    <location>
        <begin position="1"/>
        <end position="329"/>
    </location>
</feature>
<feature type="active site" description="Nucleophile" evidence="2">
    <location>
        <position position="149"/>
    </location>
</feature>
<feature type="binding site" evidence="1">
    <location>
        <begin position="11"/>
        <end position="12"/>
    </location>
    <ligand>
        <name>NAD(+)</name>
        <dbReference type="ChEBI" id="CHEBI:57540"/>
    </ligand>
</feature>
<feature type="binding site" evidence="1">
    <location>
        <position position="33"/>
    </location>
    <ligand>
        <name>NAD(+)</name>
        <dbReference type="ChEBI" id="CHEBI:57540"/>
    </ligand>
</feature>
<feature type="binding site" evidence="1">
    <location>
        <position position="78"/>
    </location>
    <ligand>
        <name>NAD(+)</name>
        <dbReference type="ChEBI" id="CHEBI:57540"/>
    </ligand>
</feature>
<feature type="binding site" evidence="1">
    <location>
        <begin position="148"/>
        <end position="150"/>
    </location>
    <ligand>
        <name>D-glyceraldehyde 3-phosphate</name>
        <dbReference type="ChEBI" id="CHEBI:59776"/>
    </ligand>
</feature>
<feature type="binding site" evidence="1">
    <location>
        <position position="179"/>
    </location>
    <ligand>
        <name>D-glyceraldehyde 3-phosphate</name>
        <dbReference type="ChEBI" id="CHEBI:59776"/>
    </ligand>
</feature>
<feature type="binding site" evidence="1">
    <location>
        <begin position="208"/>
        <end position="209"/>
    </location>
    <ligand>
        <name>D-glyceraldehyde 3-phosphate</name>
        <dbReference type="ChEBI" id="CHEBI:59776"/>
    </ligand>
</feature>
<feature type="binding site" evidence="1">
    <location>
        <position position="231"/>
    </location>
    <ligand>
        <name>D-glyceraldehyde 3-phosphate</name>
        <dbReference type="ChEBI" id="CHEBI:59776"/>
    </ligand>
</feature>
<feature type="binding site" evidence="1">
    <location>
        <position position="313"/>
    </location>
    <ligand>
        <name>NAD(+)</name>
        <dbReference type="ChEBI" id="CHEBI:57540"/>
    </ligand>
</feature>
<feature type="site" description="Activates thiol group during catalysis" evidence="1">
    <location>
        <position position="176"/>
    </location>
</feature>
<comment type="catalytic activity">
    <reaction evidence="2">
        <text>D-glyceraldehyde 3-phosphate + phosphate + NAD(+) = (2R)-3-phospho-glyceroyl phosphate + NADH + H(+)</text>
        <dbReference type="Rhea" id="RHEA:10300"/>
        <dbReference type="ChEBI" id="CHEBI:15378"/>
        <dbReference type="ChEBI" id="CHEBI:43474"/>
        <dbReference type="ChEBI" id="CHEBI:57540"/>
        <dbReference type="ChEBI" id="CHEBI:57604"/>
        <dbReference type="ChEBI" id="CHEBI:57945"/>
        <dbReference type="ChEBI" id="CHEBI:59776"/>
        <dbReference type="EC" id="1.2.1.12"/>
    </reaction>
</comment>
<comment type="pathway">
    <text>Carbohydrate degradation; glycolysis; pyruvate from D-glyceraldehyde 3-phosphate: step 1/5.</text>
</comment>
<comment type="subunit">
    <text>Homotetramer.</text>
</comment>
<comment type="subcellular location">
    <subcellularLocation>
        <location>Cytoplasm</location>
    </subcellularLocation>
</comment>
<comment type="similarity">
    <text evidence="3">Belongs to the glyceraldehyde-3-phosphate dehydrogenase family.</text>
</comment>
<sequence length="329" mass="35324">MVKVAINGFGRIGRLVLRIALQRKALEVVAVNDPFISVDYAAYMFKYDSTHGRYKGEVTTSGNDLVIDGHKIAVFQEKDPANLPWGKLGVDIVIDSTGVFKELDSAQKHLDAGAKKVVITAPSKTAPMFVVGVNEDKYNGETIVSNASCTTNCLAPIAKIINDEFGIDEALMTTVHSITATQKTVDGPSHKDWRGGRTASGNIIPSSTGAAKAVGKVLPELQGKLTGMAFRVPTVDVSVVDLTVKLAKEATYDEIKAAVKKASQGKLKNVVGYTEDSVVSSDFLGDTHSTIFDASAGIQLSPKFVKVVAWYDNEYGYSERVVDLVEHVA</sequence>
<proteinExistence type="evidence at protein level"/>
<name>G3P1_KLULA</name>
<accession>P17819</accession>
<keyword id="KW-0002">3D-structure</keyword>
<keyword id="KW-0963">Cytoplasm</keyword>
<keyword id="KW-0324">Glycolysis</keyword>
<keyword id="KW-0520">NAD</keyword>
<keyword id="KW-0560">Oxidoreductase</keyword>
<keyword id="KW-1185">Reference proteome</keyword>
<reference key="1">
    <citation type="journal article" date="1990" name="Nucleic Acids Res.">
        <title>Kluyveromyces lactis glyceraldehyde-3-phosphate dehydrogenase and alcohol dehydrogenase-1 genes are linked and divergently transcribed.</title>
        <authorList>
            <person name="Shuster J.R."/>
        </authorList>
    </citation>
    <scope>NUCLEOTIDE SEQUENCE [GENOMIC DNA]</scope>
    <source>
        <strain>SD11</strain>
    </source>
</reference>
<reference key="2">
    <citation type="journal article" date="2004" name="Nature">
        <title>Genome evolution in yeasts.</title>
        <authorList>
            <person name="Dujon B."/>
            <person name="Sherman D."/>
            <person name="Fischer G."/>
            <person name="Durrens P."/>
            <person name="Casaregola S."/>
            <person name="Lafontaine I."/>
            <person name="de Montigny J."/>
            <person name="Marck C."/>
            <person name="Neuveglise C."/>
            <person name="Talla E."/>
            <person name="Goffard N."/>
            <person name="Frangeul L."/>
            <person name="Aigle M."/>
            <person name="Anthouard V."/>
            <person name="Babour A."/>
            <person name="Barbe V."/>
            <person name="Barnay S."/>
            <person name="Blanchin S."/>
            <person name="Beckerich J.-M."/>
            <person name="Beyne E."/>
            <person name="Bleykasten C."/>
            <person name="Boisrame A."/>
            <person name="Boyer J."/>
            <person name="Cattolico L."/>
            <person name="Confanioleri F."/>
            <person name="de Daruvar A."/>
            <person name="Despons L."/>
            <person name="Fabre E."/>
            <person name="Fairhead C."/>
            <person name="Ferry-Dumazet H."/>
            <person name="Groppi A."/>
            <person name="Hantraye F."/>
            <person name="Hennequin C."/>
            <person name="Jauniaux N."/>
            <person name="Joyet P."/>
            <person name="Kachouri R."/>
            <person name="Kerrest A."/>
            <person name="Koszul R."/>
            <person name="Lemaire M."/>
            <person name="Lesur I."/>
            <person name="Ma L."/>
            <person name="Muller H."/>
            <person name="Nicaud J.-M."/>
            <person name="Nikolski M."/>
            <person name="Oztas S."/>
            <person name="Ozier-Kalogeropoulos O."/>
            <person name="Pellenz S."/>
            <person name="Potier S."/>
            <person name="Richard G.-F."/>
            <person name="Straub M.-L."/>
            <person name="Suleau A."/>
            <person name="Swennen D."/>
            <person name="Tekaia F."/>
            <person name="Wesolowski-Louvel M."/>
            <person name="Westhof E."/>
            <person name="Wirth B."/>
            <person name="Zeniou-Meyer M."/>
            <person name="Zivanovic Y."/>
            <person name="Bolotin-Fukuhara M."/>
            <person name="Thierry A."/>
            <person name="Bouchier C."/>
            <person name="Caudron B."/>
            <person name="Scarpelli C."/>
            <person name="Gaillardin C."/>
            <person name="Weissenbach J."/>
            <person name="Wincker P."/>
            <person name="Souciet J.-L."/>
        </authorList>
    </citation>
    <scope>NUCLEOTIDE SEQUENCE [LARGE SCALE GENOMIC DNA]</scope>
    <source>
        <strain>ATCC 8585 / CBS 2359 / DSM 70799 / NBRC 1267 / NRRL Y-1140 / WM37</strain>
    </source>
</reference>
<gene>
    <name type="primary">GAP1</name>
    <name type="ordered locus">KLLA0F20988g</name>
</gene>